<sequence>MTSRTNEFFGLTKNGDIDAANIPLKRISYTDPFLAEGYRIHETIVNLLVFLKKIRGAYLKDRTFSNVQRLSKPLMECSLEELSKLELDEVQRDEIEHEVSSAISSCIHQIAKLQEIVKEQQSQIPKKSGWLQGLRDPSKLSKKETLVAHHSSVLWYLQSELSDVSSVLYHLQDLRLKRGQEKRNIASDFLTKNPTDENSAVEIPESELQTFFTQQQLQELEQENDVLLQEFEHTMERLRDTGKSLADITRLQSEISAQLSIQSSAAEKLYDDALNVMDSLSGGNQQLIKAKSRSSRTARLLFCIFTVMGLLLLSLDRIV</sequence>
<reference key="1">
    <citation type="journal article" date="2002" name="Nature">
        <title>The genome sequence of Schizosaccharomyces pombe.</title>
        <authorList>
            <person name="Wood V."/>
            <person name="Gwilliam R."/>
            <person name="Rajandream M.A."/>
            <person name="Lyne M.H."/>
            <person name="Lyne R."/>
            <person name="Stewart A."/>
            <person name="Sgouros J.G."/>
            <person name="Peat N."/>
            <person name="Hayles J."/>
            <person name="Baker S.G."/>
            <person name="Basham D."/>
            <person name="Bowman S."/>
            <person name="Brooks K."/>
            <person name="Brown D."/>
            <person name="Brown S."/>
            <person name="Chillingworth T."/>
            <person name="Churcher C.M."/>
            <person name="Collins M."/>
            <person name="Connor R."/>
            <person name="Cronin A."/>
            <person name="Davis P."/>
            <person name="Feltwell T."/>
            <person name="Fraser A."/>
            <person name="Gentles S."/>
            <person name="Goble A."/>
            <person name="Hamlin N."/>
            <person name="Harris D.E."/>
            <person name="Hidalgo J."/>
            <person name="Hodgson G."/>
            <person name="Holroyd S."/>
            <person name="Hornsby T."/>
            <person name="Howarth S."/>
            <person name="Huckle E.J."/>
            <person name="Hunt S."/>
            <person name="Jagels K."/>
            <person name="James K.D."/>
            <person name="Jones L."/>
            <person name="Jones M."/>
            <person name="Leather S."/>
            <person name="McDonald S."/>
            <person name="McLean J."/>
            <person name="Mooney P."/>
            <person name="Moule S."/>
            <person name="Mungall K.L."/>
            <person name="Murphy L.D."/>
            <person name="Niblett D."/>
            <person name="Odell C."/>
            <person name="Oliver K."/>
            <person name="O'Neil S."/>
            <person name="Pearson D."/>
            <person name="Quail M.A."/>
            <person name="Rabbinowitsch E."/>
            <person name="Rutherford K.M."/>
            <person name="Rutter S."/>
            <person name="Saunders D."/>
            <person name="Seeger K."/>
            <person name="Sharp S."/>
            <person name="Skelton J."/>
            <person name="Simmonds M.N."/>
            <person name="Squares R."/>
            <person name="Squares S."/>
            <person name="Stevens K."/>
            <person name="Taylor K."/>
            <person name="Taylor R.G."/>
            <person name="Tivey A."/>
            <person name="Walsh S.V."/>
            <person name="Warren T."/>
            <person name="Whitehead S."/>
            <person name="Woodward J.R."/>
            <person name="Volckaert G."/>
            <person name="Aert R."/>
            <person name="Robben J."/>
            <person name="Grymonprez B."/>
            <person name="Weltjens I."/>
            <person name="Vanstreels E."/>
            <person name="Rieger M."/>
            <person name="Schaefer M."/>
            <person name="Mueller-Auer S."/>
            <person name="Gabel C."/>
            <person name="Fuchs M."/>
            <person name="Duesterhoeft A."/>
            <person name="Fritzc C."/>
            <person name="Holzer E."/>
            <person name="Moestl D."/>
            <person name="Hilbert H."/>
            <person name="Borzym K."/>
            <person name="Langer I."/>
            <person name="Beck A."/>
            <person name="Lehrach H."/>
            <person name="Reinhardt R."/>
            <person name="Pohl T.M."/>
            <person name="Eger P."/>
            <person name="Zimmermann W."/>
            <person name="Wedler H."/>
            <person name="Wambutt R."/>
            <person name="Purnelle B."/>
            <person name="Goffeau A."/>
            <person name="Cadieu E."/>
            <person name="Dreano S."/>
            <person name="Gloux S."/>
            <person name="Lelaure V."/>
            <person name="Mottier S."/>
            <person name="Galibert F."/>
            <person name="Aves S.J."/>
            <person name="Xiang Z."/>
            <person name="Hunt C."/>
            <person name="Moore K."/>
            <person name="Hurst S.M."/>
            <person name="Lucas M."/>
            <person name="Rochet M."/>
            <person name="Gaillardin C."/>
            <person name="Tallada V.A."/>
            <person name="Garzon A."/>
            <person name="Thode G."/>
            <person name="Daga R.R."/>
            <person name="Cruzado L."/>
            <person name="Jimenez J."/>
            <person name="Sanchez M."/>
            <person name="del Rey F."/>
            <person name="Benito J."/>
            <person name="Dominguez A."/>
            <person name="Revuelta J.L."/>
            <person name="Moreno S."/>
            <person name="Armstrong J."/>
            <person name="Forsburg S.L."/>
            <person name="Cerutti L."/>
            <person name="Lowe T."/>
            <person name="McCombie W.R."/>
            <person name="Paulsen I."/>
            <person name="Potashkin J."/>
            <person name="Shpakovski G.V."/>
            <person name="Ussery D."/>
            <person name="Barrell B.G."/>
            <person name="Nurse P."/>
        </authorList>
    </citation>
    <scope>NUCLEOTIDE SEQUENCE [LARGE SCALE GENOMIC DNA]</scope>
    <source>
        <strain>972 / ATCC 24843</strain>
    </source>
</reference>
<reference key="2">
    <citation type="journal article" date="2004" name="Mol. Genet. Genomics">
        <title>Two-hybrid search for proteins that interact with Sad1 and Kms1, two membrane-bound components of the spindle pole body in fission yeast.</title>
        <authorList>
            <person name="Miki F."/>
            <person name="Kurabayashi A."/>
            <person name="Tange Y."/>
            <person name="Okazaki K."/>
            <person name="Shimanuki M."/>
            <person name="Niwa O."/>
        </authorList>
    </citation>
    <scope>INTERACTION WITH SAD1</scope>
    <scope>SUBCELLULAR LOCATION</scope>
</reference>
<feature type="chain" id="PRO_0000210282" description="Syntaxin ufe1">
    <location>
        <begin position="1"/>
        <end position="319"/>
    </location>
</feature>
<feature type="topological domain" description="Cytoplasmic" evidence="2">
    <location>
        <begin position="1"/>
        <end position="297"/>
    </location>
</feature>
<feature type="transmembrane region" description="Helical; Anchor for type IV membrane protein" evidence="2">
    <location>
        <begin position="298"/>
        <end position="315"/>
    </location>
</feature>
<feature type="topological domain" description="Lumenal" evidence="2">
    <location>
        <begin position="316"/>
        <end position="319"/>
    </location>
</feature>
<feature type="domain" description="t-SNARE coiled-coil homology">
    <location>
        <begin position="228"/>
        <end position="290"/>
    </location>
</feature>
<name>UFE1_SCHPO</name>
<dbReference type="EMBL" id="CU329672">
    <property type="protein sequence ID" value="CAA22840.1"/>
    <property type="molecule type" value="Genomic_DNA"/>
</dbReference>
<dbReference type="PIR" id="T41642">
    <property type="entry name" value="T41642"/>
</dbReference>
<dbReference type="RefSeq" id="NP_588045.1">
    <property type="nucleotide sequence ID" value="NM_001023037.2"/>
</dbReference>
<dbReference type="SMR" id="O94531"/>
<dbReference type="BioGRID" id="275464">
    <property type="interactions" value="6"/>
</dbReference>
<dbReference type="FunCoup" id="O94531">
    <property type="interactions" value="234"/>
</dbReference>
<dbReference type="IntAct" id="O94531">
    <property type="interactions" value="2"/>
</dbReference>
<dbReference type="STRING" id="284812.O94531"/>
<dbReference type="iPTMnet" id="O94531"/>
<dbReference type="PaxDb" id="4896-SPCC895.04c.1"/>
<dbReference type="EnsemblFungi" id="SPCC895.04c.1">
    <property type="protein sequence ID" value="SPCC895.04c.1:pep"/>
    <property type="gene ID" value="SPCC895.04c"/>
</dbReference>
<dbReference type="GeneID" id="2538886"/>
<dbReference type="KEGG" id="spo:2538886"/>
<dbReference type="PomBase" id="SPCC895.04c">
    <property type="gene designation" value="ufe1"/>
</dbReference>
<dbReference type="VEuPathDB" id="FungiDB:SPCC895.04c"/>
<dbReference type="eggNOG" id="KOG3894">
    <property type="taxonomic scope" value="Eukaryota"/>
</dbReference>
<dbReference type="HOGENOM" id="CLU_038403_0_0_1"/>
<dbReference type="InParanoid" id="O94531"/>
<dbReference type="OMA" id="YRIRTHI"/>
<dbReference type="Reactome" id="R-SPO-6811434">
    <property type="pathway name" value="COPI-dependent Golgi-to-ER retrograde traffic"/>
</dbReference>
<dbReference type="PRO" id="PR:O94531"/>
<dbReference type="Proteomes" id="UP000002485">
    <property type="component" value="Chromosome III"/>
</dbReference>
<dbReference type="GO" id="GO:0005783">
    <property type="term" value="C:endoplasmic reticulum"/>
    <property type="evidence" value="ECO:0000318"/>
    <property type="project" value="GO_Central"/>
</dbReference>
<dbReference type="GO" id="GO:0005789">
    <property type="term" value="C:endoplasmic reticulum membrane"/>
    <property type="evidence" value="ECO:0000250"/>
    <property type="project" value="PomBase"/>
</dbReference>
<dbReference type="GO" id="GO:0031201">
    <property type="term" value="C:SNARE complex"/>
    <property type="evidence" value="ECO:0000318"/>
    <property type="project" value="GO_Central"/>
</dbReference>
<dbReference type="GO" id="GO:0005484">
    <property type="term" value="F:SNAP receptor activity"/>
    <property type="evidence" value="ECO:0000250"/>
    <property type="project" value="PomBase"/>
</dbReference>
<dbReference type="GO" id="GO:0015031">
    <property type="term" value="P:protein transport"/>
    <property type="evidence" value="ECO:0007669"/>
    <property type="project" value="UniProtKB-KW"/>
</dbReference>
<dbReference type="GO" id="GO:0006890">
    <property type="term" value="P:retrograde vesicle-mediated transport, Golgi to endoplasmic reticulum"/>
    <property type="evidence" value="ECO:0000318"/>
    <property type="project" value="GO_Central"/>
</dbReference>
<dbReference type="Gene3D" id="1.20.5.110">
    <property type="match status" value="1"/>
</dbReference>
<dbReference type="PANTHER" id="PTHR15959">
    <property type="entry name" value="SYNTAXIN-18"/>
    <property type="match status" value="1"/>
</dbReference>
<dbReference type="PANTHER" id="PTHR15959:SF0">
    <property type="entry name" value="SYNTAXIN-18"/>
    <property type="match status" value="1"/>
</dbReference>
<proteinExistence type="evidence at protein level"/>
<organism>
    <name type="scientific">Schizosaccharomyces pombe (strain 972 / ATCC 24843)</name>
    <name type="common">Fission yeast</name>
    <dbReference type="NCBI Taxonomy" id="284812"/>
    <lineage>
        <taxon>Eukaryota</taxon>
        <taxon>Fungi</taxon>
        <taxon>Dikarya</taxon>
        <taxon>Ascomycota</taxon>
        <taxon>Taphrinomycotina</taxon>
        <taxon>Schizosaccharomycetes</taxon>
        <taxon>Schizosaccharomycetales</taxon>
        <taxon>Schizosaccharomycetaceae</taxon>
        <taxon>Schizosaccharomyces</taxon>
    </lineage>
</organism>
<comment type="function">
    <text evidence="1">Syntaxin required for targeting and fusion of Golgi-derived retrograde transport vesicles with the ER.</text>
</comment>
<comment type="subunit">
    <text evidence="1 3">Component of a SNARE complex consisting of ufe1, use1, sec20 and sec22 or ykt6 (By similarity). Interacts with sad1.</text>
</comment>
<comment type="interaction">
    <interactant intactId="EBI-1542297">
        <id>O94531</id>
    </interactant>
    <interactant intactId="EBI-1542265">
        <id>P87245</id>
        <label>kms1</label>
    </interactant>
    <organismsDiffer>false</organismsDiffer>
    <experiments>3</experiments>
</comment>
<comment type="interaction">
    <interactant intactId="EBI-1542297">
        <id>O94531</id>
    </interactant>
    <interactant intactId="EBI-929731">
        <id>Q09825</id>
        <label>sad1</label>
    </interactant>
    <organismsDiffer>false</organismsDiffer>
    <experiments>3</experiments>
</comment>
<comment type="subcellular location">
    <subcellularLocation>
        <location evidence="1">Endoplasmic reticulum membrane</location>
        <topology evidence="1">Single-pass type IV membrane protein</topology>
    </subcellularLocation>
</comment>
<comment type="similarity">
    <text evidence="4">Belongs to the syntaxin family.</text>
</comment>
<keyword id="KW-0175">Coiled coil</keyword>
<keyword id="KW-0256">Endoplasmic reticulum</keyword>
<keyword id="KW-0931">ER-Golgi transport</keyword>
<keyword id="KW-0472">Membrane</keyword>
<keyword id="KW-0653">Protein transport</keyword>
<keyword id="KW-1185">Reference proteome</keyword>
<keyword id="KW-0812">Transmembrane</keyword>
<keyword id="KW-1133">Transmembrane helix</keyword>
<keyword id="KW-0813">Transport</keyword>
<gene>
    <name type="primary">ufe1</name>
    <name type="ORF">SPCC895.04c</name>
</gene>
<protein>
    <recommendedName>
        <fullName>Syntaxin ufe1</fullName>
    </recommendedName>
</protein>
<evidence type="ECO:0000250" key="1"/>
<evidence type="ECO:0000255" key="2"/>
<evidence type="ECO:0000269" key="3">
    <source>
    </source>
</evidence>
<evidence type="ECO:0000305" key="4"/>
<accession>O94531</accession>